<keyword id="KW-0106">Calcium</keyword>
<keyword id="KW-1015">Disulfide bond</keyword>
<keyword id="KW-0378">Hydrolase</keyword>
<keyword id="KW-0442">Lipid degradation</keyword>
<keyword id="KW-0443">Lipid metabolism</keyword>
<keyword id="KW-0479">Metal-binding</keyword>
<keyword id="KW-0964">Secreted</keyword>
<keyword id="KW-0732">Signal</keyword>
<comment type="function">
    <text evidence="1">PLA2 catalyzes the calcium-dependent hydrolysis of the 2-acyl groups in 3-sn-phosphoglycerides.</text>
</comment>
<comment type="catalytic activity">
    <reaction evidence="3 4">
        <text>a 1,2-diacyl-sn-glycero-3-phosphocholine + H2O = a 1-acyl-sn-glycero-3-phosphocholine + a fatty acid + H(+)</text>
        <dbReference type="Rhea" id="RHEA:15801"/>
        <dbReference type="ChEBI" id="CHEBI:15377"/>
        <dbReference type="ChEBI" id="CHEBI:15378"/>
        <dbReference type="ChEBI" id="CHEBI:28868"/>
        <dbReference type="ChEBI" id="CHEBI:57643"/>
        <dbReference type="ChEBI" id="CHEBI:58168"/>
        <dbReference type="EC" id="3.1.1.4"/>
    </reaction>
</comment>
<comment type="cofactor">
    <cofactor evidence="1">
        <name>Ca(2+)</name>
        <dbReference type="ChEBI" id="CHEBI:29108"/>
    </cofactor>
    <text evidence="1">Binds 1 Ca(2+) ion.</text>
</comment>
<comment type="subcellular location">
    <subcellularLocation>
        <location evidence="1">Secreted</location>
    </subcellularLocation>
</comment>
<comment type="tissue specificity">
    <text>Expressed by the venom gland.</text>
</comment>
<comment type="similarity">
    <text evidence="5">Belongs to the phospholipase A2 family. Group I subfamily. D49 sub-subfamily.</text>
</comment>
<accession>Q9I842</accession>
<sequence>MYPAHLLVLLAVCVSLLGASAIPPLPLNLVQFTYLIQCANKGSRPSYHYADYGCYCGAGGSGTPVDELDRCCKVHDDCYGEAEKMGCYPKLTMYNYYCGTEGPYCNTKTDCQRYVCACDLQAAKCFARSPYNNKNYNIDTSKRCK</sequence>
<name>PA2BF_LATSE</name>
<feature type="signal peptide" evidence="2">
    <location>
        <begin position="1"/>
        <end position="21"/>
    </location>
</feature>
<feature type="propeptide" id="PRO_0000022908" evidence="1">
    <location>
        <begin position="22"/>
        <end position="27"/>
    </location>
</feature>
<feature type="chain" id="PRO_0000022909" description="Basic phospholipase A2 cPm08">
    <location>
        <begin position="28"/>
        <end position="145"/>
    </location>
</feature>
<feature type="active site" evidence="1">
    <location>
        <position position="75"/>
    </location>
</feature>
<feature type="active site" evidence="1">
    <location>
        <position position="119"/>
    </location>
</feature>
<feature type="binding site" evidence="1">
    <location>
        <position position="55"/>
    </location>
    <ligand>
        <name>Ca(2+)</name>
        <dbReference type="ChEBI" id="CHEBI:29108"/>
    </ligand>
</feature>
<feature type="binding site" evidence="1">
    <location>
        <position position="57"/>
    </location>
    <ligand>
        <name>Ca(2+)</name>
        <dbReference type="ChEBI" id="CHEBI:29108"/>
    </ligand>
</feature>
<feature type="binding site" evidence="1">
    <location>
        <position position="59"/>
    </location>
    <ligand>
        <name>Ca(2+)</name>
        <dbReference type="ChEBI" id="CHEBI:29108"/>
    </ligand>
</feature>
<feature type="binding site" evidence="1">
    <location>
        <position position="76"/>
    </location>
    <ligand>
        <name>Ca(2+)</name>
        <dbReference type="ChEBI" id="CHEBI:29108"/>
    </ligand>
</feature>
<feature type="disulfide bond" evidence="1">
    <location>
        <begin position="38"/>
        <end position="98"/>
    </location>
</feature>
<feature type="disulfide bond" evidence="1">
    <location>
        <begin position="54"/>
        <end position="144"/>
    </location>
</feature>
<feature type="disulfide bond" evidence="1">
    <location>
        <begin position="56"/>
        <end position="72"/>
    </location>
</feature>
<feature type="disulfide bond" evidence="1">
    <location>
        <begin position="71"/>
        <end position="125"/>
    </location>
</feature>
<feature type="disulfide bond" evidence="1">
    <location>
        <begin position="78"/>
        <end position="118"/>
    </location>
</feature>
<feature type="disulfide bond" evidence="1">
    <location>
        <begin position="87"/>
        <end position="111"/>
    </location>
</feature>
<feature type="disulfide bond" evidence="1">
    <location>
        <begin position="105"/>
        <end position="116"/>
    </location>
</feature>
<evidence type="ECO:0000250" key="1"/>
<evidence type="ECO:0000255" key="2"/>
<evidence type="ECO:0000255" key="3">
    <source>
        <dbReference type="PROSITE-ProRule" id="PRU10035"/>
    </source>
</evidence>
<evidence type="ECO:0000255" key="4">
    <source>
        <dbReference type="PROSITE-ProRule" id="PRU10036"/>
    </source>
</evidence>
<evidence type="ECO:0000305" key="5"/>
<protein>
    <recommendedName>
        <fullName>Basic phospholipase A2 cPm08</fullName>
        <shortName>svPLA2</shortName>
        <ecNumber>3.1.1.4</ecNumber>
    </recommendedName>
    <alternativeName>
        <fullName>Phosphatidylcholine 2-acylhydrolase</fullName>
    </alternativeName>
</protein>
<organism>
    <name type="scientific">Laticauda semifasciata</name>
    <name type="common">Black-banded sea krait</name>
    <name type="synonym">Pseudolaticauda semifasciata</name>
    <dbReference type="NCBI Taxonomy" id="8631"/>
    <lineage>
        <taxon>Eukaryota</taxon>
        <taxon>Metazoa</taxon>
        <taxon>Chordata</taxon>
        <taxon>Craniata</taxon>
        <taxon>Vertebrata</taxon>
        <taxon>Euteleostomi</taxon>
        <taxon>Lepidosauria</taxon>
        <taxon>Squamata</taxon>
        <taxon>Bifurcata</taxon>
        <taxon>Unidentata</taxon>
        <taxon>Episquamata</taxon>
        <taxon>Toxicofera</taxon>
        <taxon>Serpentes</taxon>
        <taxon>Colubroidea</taxon>
        <taxon>Elapidae</taxon>
        <taxon>Laticaudinae</taxon>
        <taxon>Laticauda</taxon>
    </lineage>
</organism>
<reference key="1">
    <citation type="submission" date="2000-01" db="EMBL/GenBank/DDBJ databases">
        <authorList>
            <person name="Tamiya T."/>
            <person name="Fujimi T.J."/>
        </authorList>
    </citation>
    <scope>NUCLEOTIDE SEQUENCE [MRNA]</scope>
    <source>
        <tissue>Venom gland</tissue>
    </source>
</reference>
<dbReference type="EC" id="3.1.1.4"/>
<dbReference type="EMBL" id="AB037414">
    <property type="protein sequence ID" value="BAB03301.1"/>
    <property type="molecule type" value="mRNA"/>
</dbReference>
<dbReference type="SMR" id="Q9I842"/>
<dbReference type="GO" id="GO:0005576">
    <property type="term" value="C:extracellular region"/>
    <property type="evidence" value="ECO:0007669"/>
    <property type="project" value="UniProtKB-SubCell"/>
</dbReference>
<dbReference type="GO" id="GO:0005509">
    <property type="term" value="F:calcium ion binding"/>
    <property type="evidence" value="ECO:0007669"/>
    <property type="project" value="InterPro"/>
</dbReference>
<dbReference type="GO" id="GO:0047498">
    <property type="term" value="F:calcium-dependent phospholipase A2 activity"/>
    <property type="evidence" value="ECO:0007669"/>
    <property type="project" value="TreeGrafter"/>
</dbReference>
<dbReference type="GO" id="GO:0005543">
    <property type="term" value="F:phospholipid binding"/>
    <property type="evidence" value="ECO:0007669"/>
    <property type="project" value="TreeGrafter"/>
</dbReference>
<dbReference type="GO" id="GO:0050482">
    <property type="term" value="P:arachidonate secretion"/>
    <property type="evidence" value="ECO:0007669"/>
    <property type="project" value="InterPro"/>
</dbReference>
<dbReference type="GO" id="GO:0016042">
    <property type="term" value="P:lipid catabolic process"/>
    <property type="evidence" value="ECO:0007669"/>
    <property type="project" value="UniProtKB-KW"/>
</dbReference>
<dbReference type="GO" id="GO:0006644">
    <property type="term" value="P:phospholipid metabolic process"/>
    <property type="evidence" value="ECO:0007669"/>
    <property type="project" value="InterPro"/>
</dbReference>
<dbReference type="CDD" id="cd00125">
    <property type="entry name" value="PLA2c"/>
    <property type="match status" value="1"/>
</dbReference>
<dbReference type="FunFam" id="1.20.90.10:FF:000007">
    <property type="entry name" value="Acidic phospholipase A2"/>
    <property type="match status" value="1"/>
</dbReference>
<dbReference type="Gene3D" id="1.20.90.10">
    <property type="entry name" value="Phospholipase A2 domain"/>
    <property type="match status" value="1"/>
</dbReference>
<dbReference type="InterPro" id="IPR001211">
    <property type="entry name" value="PLipase_A2"/>
</dbReference>
<dbReference type="InterPro" id="IPR033112">
    <property type="entry name" value="PLipase_A2_Asp_AS"/>
</dbReference>
<dbReference type="InterPro" id="IPR016090">
    <property type="entry name" value="PLipase_A2_dom"/>
</dbReference>
<dbReference type="InterPro" id="IPR036444">
    <property type="entry name" value="PLipase_A2_dom_sf"/>
</dbReference>
<dbReference type="InterPro" id="IPR033113">
    <property type="entry name" value="PLipase_A2_His_AS"/>
</dbReference>
<dbReference type="PANTHER" id="PTHR11716:SF51">
    <property type="entry name" value="PHOSPHOLIPASE A2"/>
    <property type="match status" value="1"/>
</dbReference>
<dbReference type="PANTHER" id="PTHR11716">
    <property type="entry name" value="PHOSPHOLIPASE A2 FAMILY MEMBER"/>
    <property type="match status" value="1"/>
</dbReference>
<dbReference type="Pfam" id="PF00068">
    <property type="entry name" value="Phospholip_A2_1"/>
    <property type="match status" value="1"/>
</dbReference>
<dbReference type="PRINTS" id="PR00389">
    <property type="entry name" value="PHPHLIPASEA2"/>
</dbReference>
<dbReference type="SMART" id="SM00085">
    <property type="entry name" value="PA2c"/>
    <property type="match status" value="1"/>
</dbReference>
<dbReference type="SUPFAM" id="SSF48619">
    <property type="entry name" value="Phospholipase A2, PLA2"/>
    <property type="match status" value="1"/>
</dbReference>
<dbReference type="PROSITE" id="PS00119">
    <property type="entry name" value="PA2_ASP"/>
    <property type="match status" value="1"/>
</dbReference>
<dbReference type="PROSITE" id="PS00118">
    <property type="entry name" value="PA2_HIS"/>
    <property type="match status" value="1"/>
</dbReference>
<proteinExistence type="evidence at transcript level"/>